<name>LFTR_BURP6</name>
<dbReference type="EC" id="2.3.2.6" evidence="1"/>
<dbReference type="EMBL" id="CP000570">
    <property type="protein sequence ID" value="ABN83242.1"/>
    <property type="molecule type" value="Genomic_DNA"/>
</dbReference>
<dbReference type="RefSeq" id="WP_004542250.1">
    <property type="nucleotide sequence ID" value="NC_009074.1"/>
</dbReference>
<dbReference type="SMR" id="A3N927"/>
<dbReference type="KEGG" id="bpd:BURPS668_1811"/>
<dbReference type="HOGENOM" id="CLU_075045_0_0_4"/>
<dbReference type="GO" id="GO:0005737">
    <property type="term" value="C:cytoplasm"/>
    <property type="evidence" value="ECO:0007669"/>
    <property type="project" value="UniProtKB-SubCell"/>
</dbReference>
<dbReference type="GO" id="GO:0008914">
    <property type="term" value="F:leucyl-tRNA--protein transferase activity"/>
    <property type="evidence" value="ECO:0007669"/>
    <property type="project" value="UniProtKB-UniRule"/>
</dbReference>
<dbReference type="GO" id="GO:0030163">
    <property type="term" value="P:protein catabolic process"/>
    <property type="evidence" value="ECO:0007669"/>
    <property type="project" value="UniProtKB-UniRule"/>
</dbReference>
<dbReference type="Gene3D" id="3.40.630.70">
    <property type="entry name" value="Leucyl/phenylalanyl-tRNA-protein transferase, C-terminal domain"/>
    <property type="match status" value="1"/>
</dbReference>
<dbReference type="Gene3D" id="3.30.70.3550">
    <property type="entry name" value="Leucyl/phenylalanyl-tRNA-protein transferase, N-terminal domain"/>
    <property type="match status" value="1"/>
</dbReference>
<dbReference type="HAMAP" id="MF_00688">
    <property type="entry name" value="Leu_Phe_trans"/>
    <property type="match status" value="1"/>
</dbReference>
<dbReference type="InterPro" id="IPR016181">
    <property type="entry name" value="Acyl_CoA_acyltransferase"/>
</dbReference>
<dbReference type="InterPro" id="IPR004616">
    <property type="entry name" value="Leu/Phe-tRNA_Trfase"/>
</dbReference>
<dbReference type="InterPro" id="IPR042203">
    <property type="entry name" value="Leu/Phe-tRNA_Trfase_C"/>
</dbReference>
<dbReference type="InterPro" id="IPR042221">
    <property type="entry name" value="Leu/Phe-tRNA_Trfase_N"/>
</dbReference>
<dbReference type="NCBIfam" id="TIGR00667">
    <property type="entry name" value="aat"/>
    <property type="match status" value="1"/>
</dbReference>
<dbReference type="PANTHER" id="PTHR30098">
    <property type="entry name" value="LEUCYL/PHENYLALANYL-TRNA--PROTEIN TRANSFERASE"/>
    <property type="match status" value="1"/>
</dbReference>
<dbReference type="PANTHER" id="PTHR30098:SF2">
    <property type="entry name" value="LEUCYL_PHENYLALANYL-TRNA--PROTEIN TRANSFERASE"/>
    <property type="match status" value="1"/>
</dbReference>
<dbReference type="Pfam" id="PF03588">
    <property type="entry name" value="Leu_Phe_trans"/>
    <property type="match status" value="1"/>
</dbReference>
<dbReference type="SUPFAM" id="SSF55729">
    <property type="entry name" value="Acyl-CoA N-acyltransferases (Nat)"/>
    <property type="match status" value="1"/>
</dbReference>
<sequence>MVPWLGPDDPFPSVERALGTASGAPGLLAASADLLPSRLIDAYRRGIFPWYSDGQPVLWWSPDPRMILVPAEFRISATFRKTLKRVLREPRWEIRVDCDFAGVMRACAQAPRRGQRGTWITAEIIDAYSSLHRAGDAHSIETWLDGRRVGGLYGVSFGRMFFGESMYAHASDASKIALAALVAHLREHRVEMIDCQQNTSHLASLGGREIARKTFVAHVRRAVAEPPIPWRFDKRVVAGLLGQAASATAADAFDR</sequence>
<organism>
    <name type="scientific">Burkholderia pseudomallei (strain 668)</name>
    <dbReference type="NCBI Taxonomy" id="320373"/>
    <lineage>
        <taxon>Bacteria</taxon>
        <taxon>Pseudomonadati</taxon>
        <taxon>Pseudomonadota</taxon>
        <taxon>Betaproteobacteria</taxon>
        <taxon>Burkholderiales</taxon>
        <taxon>Burkholderiaceae</taxon>
        <taxon>Burkholderia</taxon>
        <taxon>pseudomallei group</taxon>
    </lineage>
</organism>
<accession>A3N927</accession>
<protein>
    <recommendedName>
        <fullName evidence="1">Leucyl/phenylalanyl-tRNA--protein transferase</fullName>
        <ecNumber evidence="1">2.3.2.6</ecNumber>
    </recommendedName>
    <alternativeName>
        <fullName evidence="1">L/F-transferase</fullName>
    </alternativeName>
    <alternativeName>
        <fullName evidence="1">Leucyltransferase</fullName>
    </alternativeName>
    <alternativeName>
        <fullName evidence="1">Phenyalanyltransferase</fullName>
    </alternativeName>
</protein>
<feature type="chain" id="PRO_1000045101" description="Leucyl/phenylalanyl-tRNA--protein transferase">
    <location>
        <begin position="1"/>
        <end position="255"/>
    </location>
</feature>
<keyword id="KW-0012">Acyltransferase</keyword>
<keyword id="KW-0963">Cytoplasm</keyword>
<keyword id="KW-0808">Transferase</keyword>
<comment type="function">
    <text evidence="1">Functions in the N-end rule pathway of protein degradation where it conjugates Leu, Phe and, less efficiently, Met from aminoacyl-tRNAs to the N-termini of proteins containing an N-terminal arginine or lysine.</text>
</comment>
<comment type="catalytic activity">
    <reaction evidence="1">
        <text>N-terminal L-lysyl-[protein] + L-leucyl-tRNA(Leu) = N-terminal L-leucyl-L-lysyl-[protein] + tRNA(Leu) + H(+)</text>
        <dbReference type="Rhea" id="RHEA:12340"/>
        <dbReference type="Rhea" id="RHEA-COMP:9613"/>
        <dbReference type="Rhea" id="RHEA-COMP:9622"/>
        <dbReference type="Rhea" id="RHEA-COMP:12670"/>
        <dbReference type="Rhea" id="RHEA-COMP:12671"/>
        <dbReference type="ChEBI" id="CHEBI:15378"/>
        <dbReference type="ChEBI" id="CHEBI:65249"/>
        <dbReference type="ChEBI" id="CHEBI:78442"/>
        <dbReference type="ChEBI" id="CHEBI:78494"/>
        <dbReference type="ChEBI" id="CHEBI:133043"/>
        <dbReference type="EC" id="2.3.2.6"/>
    </reaction>
</comment>
<comment type="catalytic activity">
    <reaction evidence="1">
        <text>N-terminal L-arginyl-[protein] + L-leucyl-tRNA(Leu) = N-terminal L-leucyl-L-arginyl-[protein] + tRNA(Leu) + H(+)</text>
        <dbReference type="Rhea" id="RHEA:50416"/>
        <dbReference type="Rhea" id="RHEA-COMP:9613"/>
        <dbReference type="Rhea" id="RHEA-COMP:9622"/>
        <dbReference type="Rhea" id="RHEA-COMP:12672"/>
        <dbReference type="Rhea" id="RHEA-COMP:12673"/>
        <dbReference type="ChEBI" id="CHEBI:15378"/>
        <dbReference type="ChEBI" id="CHEBI:64719"/>
        <dbReference type="ChEBI" id="CHEBI:78442"/>
        <dbReference type="ChEBI" id="CHEBI:78494"/>
        <dbReference type="ChEBI" id="CHEBI:133044"/>
        <dbReference type="EC" id="2.3.2.6"/>
    </reaction>
</comment>
<comment type="catalytic activity">
    <reaction evidence="1">
        <text>L-phenylalanyl-tRNA(Phe) + an N-terminal L-alpha-aminoacyl-[protein] = an N-terminal L-phenylalanyl-L-alpha-aminoacyl-[protein] + tRNA(Phe)</text>
        <dbReference type="Rhea" id="RHEA:43632"/>
        <dbReference type="Rhea" id="RHEA-COMP:9668"/>
        <dbReference type="Rhea" id="RHEA-COMP:9699"/>
        <dbReference type="Rhea" id="RHEA-COMP:10636"/>
        <dbReference type="Rhea" id="RHEA-COMP:10637"/>
        <dbReference type="ChEBI" id="CHEBI:78442"/>
        <dbReference type="ChEBI" id="CHEBI:78531"/>
        <dbReference type="ChEBI" id="CHEBI:78597"/>
        <dbReference type="ChEBI" id="CHEBI:83561"/>
        <dbReference type="EC" id="2.3.2.6"/>
    </reaction>
</comment>
<comment type="subcellular location">
    <subcellularLocation>
        <location evidence="1">Cytoplasm</location>
    </subcellularLocation>
</comment>
<comment type="similarity">
    <text evidence="1">Belongs to the L/F-transferase family.</text>
</comment>
<reference key="1">
    <citation type="journal article" date="2010" name="Genome Biol. Evol.">
        <title>Continuing evolution of Burkholderia mallei through genome reduction and large-scale rearrangements.</title>
        <authorList>
            <person name="Losada L."/>
            <person name="Ronning C.M."/>
            <person name="DeShazer D."/>
            <person name="Woods D."/>
            <person name="Fedorova N."/>
            <person name="Kim H.S."/>
            <person name="Shabalina S.A."/>
            <person name="Pearson T.R."/>
            <person name="Brinkac L."/>
            <person name="Tan P."/>
            <person name="Nandi T."/>
            <person name="Crabtree J."/>
            <person name="Badger J."/>
            <person name="Beckstrom-Sternberg S."/>
            <person name="Saqib M."/>
            <person name="Schutzer S.E."/>
            <person name="Keim P."/>
            <person name="Nierman W.C."/>
        </authorList>
    </citation>
    <scope>NUCLEOTIDE SEQUENCE [LARGE SCALE GENOMIC DNA]</scope>
    <source>
        <strain>668</strain>
    </source>
</reference>
<gene>
    <name evidence="1" type="primary">aat</name>
    <name type="ordered locus">BURPS668_1811</name>
</gene>
<proteinExistence type="inferred from homology"/>
<evidence type="ECO:0000255" key="1">
    <source>
        <dbReference type="HAMAP-Rule" id="MF_00688"/>
    </source>
</evidence>